<accession>Q91F84</accession>
<sequence length="116" mass="13818">MDKLISKKFSEFQYKYIADPDYKKEYDNNLKALHRIRLSHTTSYRDLAKFADPVCKTMISNEDFVKFNYNKIKKITNEVVNRTALANTALILMEIMKLETNQSVDKDWKRLLDKFL</sequence>
<gene>
    <name type="ORF">IIV6-441R</name>
</gene>
<reference key="1">
    <citation type="journal article" date="2001" name="Virology">
        <title>Analysis of the first complete DNA sequence of an invertebrate iridovirus: coding strategy of the genome of Chilo iridescent virus.</title>
        <authorList>
            <person name="Jakob N.J."/>
            <person name="Mueller K."/>
            <person name="Bahr U."/>
            <person name="Darai G."/>
        </authorList>
    </citation>
    <scope>NUCLEOTIDE SEQUENCE [LARGE SCALE GENOMIC DNA]</scope>
</reference>
<reference key="2">
    <citation type="journal article" date="2007" name="Virol. J.">
        <title>Comparative genomic analysis of the family Iridoviridae: re-annotating and defining the core set of iridovirus genes.</title>
        <authorList>
            <person name="Eaton H.E."/>
            <person name="Metcalf J."/>
            <person name="Penny E."/>
            <person name="Tcherepanov V."/>
            <person name="Upton C."/>
            <person name="Brunetti C.R."/>
        </authorList>
    </citation>
    <scope>GENOME REANNOTATION</scope>
</reference>
<keyword id="KW-1185">Reference proteome</keyword>
<name>441R_IIV6</name>
<organismHost>
    <name type="scientific">Acheta domesticus</name>
    <name type="common">House cricket</name>
    <dbReference type="NCBI Taxonomy" id="6997"/>
</organismHost>
<organismHost>
    <name type="scientific">Chilo suppressalis</name>
    <name type="common">Asiatic rice borer moth</name>
    <dbReference type="NCBI Taxonomy" id="168631"/>
</organismHost>
<organismHost>
    <name type="scientific">Gryllus bimaculatus</name>
    <name type="common">Two-spotted cricket</name>
    <dbReference type="NCBI Taxonomy" id="6999"/>
</organismHost>
<organismHost>
    <name type="scientific">Gryllus campestris</name>
    <dbReference type="NCBI Taxonomy" id="58607"/>
</organismHost>
<organismHost>
    <name type="scientific">Spodoptera frugiperda</name>
    <name type="common">Fall armyworm</name>
    <dbReference type="NCBI Taxonomy" id="7108"/>
</organismHost>
<protein>
    <recommendedName>
        <fullName>Uncharacterized protein 441R</fullName>
    </recommendedName>
</protein>
<dbReference type="EMBL" id="AF303741">
    <property type="protein sequence ID" value="AAK82301.1"/>
    <property type="molecule type" value="Genomic_DNA"/>
</dbReference>
<dbReference type="RefSeq" id="NP_149904.1">
    <property type="nucleotide sequence ID" value="NC_003038.1"/>
</dbReference>
<dbReference type="SMR" id="Q91F84"/>
<dbReference type="KEGG" id="vg:1733374"/>
<dbReference type="Proteomes" id="UP000001359">
    <property type="component" value="Genome"/>
</dbReference>
<proteinExistence type="predicted"/>
<organism>
    <name type="scientific">Invertebrate iridescent virus 6</name>
    <name type="common">IIV-6</name>
    <name type="synonym">Chilo iridescent virus</name>
    <dbReference type="NCBI Taxonomy" id="176652"/>
    <lineage>
        <taxon>Viruses</taxon>
        <taxon>Varidnaviria</taxon>
        <taxon>Bamfordvirae</taxon>
        <taxon>Nucleocytoviricota</taxon>
        <taxon>Megaviricetes</taxon>
        <taxon>Pimascovirales</taxon>
        <taxon>Iridoviridae</taxon>
        <taxon>Betairidovirinae</taxon>
        <taxon>Iridovirus</taxon>
    </lineage>
</organism>
<feature type="chain" id="PRO_0000377892" description="Uncharacterized protein 441R">
    <location>
        <begin position="1"/>
        <end position="116"/>
    </location>
</feature>